<accession>Q88K84</accession>
<organism>
    <name type="scientific">Pseudomonas putida (strain ATCC 47054 / DSM 6125 / CFBP 8728 / NCIMB 11950 / KT2440)</name>
    <dbReference type="NCBI Taxonomy" id="160488"/>
    <lineage>
        <taxon>Bacteria</taxon>
        <taxon>Pseudomonadati</taxon>
        <taxon>Pseudomonadota</taxon>
        <taxon>Gammaproteobacteria</taxon>
        <taxon>Pseudomonadales</taxon>
        <taxon>Pseudomonadaceae</taxon>
        <taxon>Pseudomonas</taxon>
    </lineage>
</organism>
<dbReference type="EC" id="4.2.1.10"/>
<dbReference type="EMBL" id="AE015451">
    <property type="protein sequence ID" value="AAN68019.1"/>
    <property type="molecule type" value="Genomic_DNA"/>
</dbReference>
<dbReference type="RefSeq" id="NP_744555.1">
    <property type="nucleotide sequence ID" value="NC_002947.4"/>
</dbReference>
<dbReference type="SMR" id="Q88K84"/>
<dbReference type="STRING" id="160488.PP_2407"/>
<dbReference type="PaxDb" id="160488-PP_2407"/>
<dbReference type="KEGG" id="ppu:PP_2407"/>
<dbReference type="PATRIC" id="fig|160488.4.peg.2550"/>
<dbReference type="eggNOG" id="COG0757">
    <property type="taxonomic scope" value="Bacteria"/>
</dbReference>
<dbReference type="HOGENOM" id="CLU_090968_2_0_6"/>
<dbReference type="OrthoDB" id="9790793at2"/>
<dbReference type="PhylomeDB" id="Q88K84"/>
<dbReference type="BioCyc" id="PPUT160488:G1G01-2570-MONOMER"/>
<dbReference type="UniPathway" id="UPA00053">
    <property type="reaction ID" value="UER00086"/>
</dbReference>
<dbReference type="Proteomes" id="UP000000556">
    <property type="component" value="Chromosome"/>
</dbReference>
<dbReference type="GO" id="GO:0003855">
    <property type="term" value="F:3-dehydroquinate dehydratase activity"/>
    <property type="evidence" value="ECO:0007669"/>
    <property type="project" value="UniProtKB-UniRule"/>
</dbReference>
<dbReference type="GO" id="GO:0008652">
    <property type="term" value="P:amino acid biosynthetic process"/>
    <property type="evidence" value="ECO:0007669"/>
    <property type="project" value="UniProtKB-KW"/>
</dbReference>
<dbReference type="GO" id="GO:0009073">
    <property type="term" value="P:aromatic amino acid family biosynthetic process"/>
    <property type="evidence" value="ECO:0007669"/>
    <property type="project" value="UniProtKB-KW"/>
</dbReference>
<dbReference type="GO" id="GO:0009423">
    <property type="term" value="P:chorismate biosynthetic process"/>
    <property type="evidence" value="ECO:0007669"/>
    <property type="project" value="UniProtKB-UniRule"/>
</dbReference>
<dbReference type="GO" id="GO:0019631">
    <property type="term" value="P:quinate catabolic process"/>
    <property type="evidence" value="ECO:0007669"/>
    <property type="project" value="TreeGrafter"/>
</dbReference>
<dbReference type="CDD" id="cd00466">
    <property type="entry name" value="DHQase_II"/>
    <property type="match status" value="1"/>
</dbReference>
<dbReference type="Gene3D" id="3.40.50.9100">
    <property type="entry name" value="Dehydroquinase, class II"/>
    <property type="match status" value="1"/>
</dbReference>
<dbReference type="HAMAP" id="MF_00169">
    <property type="entry name" value="AroQ"/>
    <property type="match status" value="1"/>
</dbReference>
<dbReference type="InterPro" id="IPR001874">
    <property type="entry name" value="DHquinase_II"/>
</dbReference>
<dbReference type="InterPro" id="IPR018509">
    <property type="entry name" value="DHquinase_II_CS"/>
</dbReference>
<dbReference type="InterPro" id="IPR036441">
    <property type="entry name" value="DHquinase_II_sf"/>
</dbReference>
<dbReference type="NCBIfam" id="TIGR01088">
    <property type="entry name" value="aroQ"/>
    <property type="match status" value="1"/>
</dbReference>
<dbReference type="NCBIfam" id="NF003804">
    <property type="entry name" value="PRK05395.1-1"/>
    <property type="match status" value="1"/>
</dbReference>
<dbReference type="NCBIfam" id="NF003805">
    <property type="entry name" value="PRK05395.1-2"/>
    <property type="match status" value="1"/>
</dbReference>
<dbReference type="NCBIfam" id="NF003806">
    <property type="entry name" value="PRK05395.1-3"/>
    <property type="match status" value="1"/>
</dbReference>
<dbReference type="NCBIfam" id="NF003807">
    <property type="entry name" value="PRK05395.1-4"/>
    <property type="match status" value="1"/>
</dbReference>
<dbReference type="PANTHER" id="PTHR21272">
    <property type="entry name" value="CATABOLIC 3-DEHYDROQUINASE"/>
    <property type="match status" value="1"/>
</dbReference>
<dbReference type="PANTHER" id="PTHR21272:SF3">
    <property type="entry name" value="CATABOLIC 3-DEHYDROQUINASE"/>
    <property type="match status" value="1"/>
</dbReference>
<dbReference type="Pfam" id="PF01220">
    <property type="entry name" value="DHquinase_II"/>
    <property type="match status" value="1"/>
</dbReference>
<dbReference type="PIRSF" id="PIRSF001399">
    <property type="entry name" value="DHquinase_II"/>
    <property type="match status" value="1"/>
</dbReference>
<dbReference type="SUPFAM" id="SSF52304">
    <property type="entry name" value="Type II 3-dehydroquinate dehydratase"/>
    <property type="match status" value="1"/>
</dbReference>
<dbReference type="PROSITE" id="PS01029">
    <property type="entry name" value="DEHYDROQUINASE_II"/>
    <property type="match status" value="1"/>
</dbReference>
<reference key="1">
    <citation type="journal article" date="2002" name="Environ. Microbiol.">
        <title>Complete genome sequence and comparative analysis of the metabolically versatile Pseudomonas putida KT2440.</title>
        <authorList>
            <person name="Nelson K.E."/>
            <person name="Weinel C."/>
            <person name="Paulsen I.T."/>
            <person name="Dodson R.J."/>
            <person name="Hilbert H."/>
            <person name="Martins dos Santos V.A.P."/>
            <person name="Fouts D.E."/>
            <person name="Gill S.R."/>
            <person name="Pop M."/>
            <person name="Holmes M."/>
            <person name="Brinkac L.M."/>
            <person name="Beanan M.J."/>
            <person name="DeBoy R.T."/>
            <person name="Daugherty S.C."/>
            <person name="Kolonay J.F."/>
            <person name="Madupu R."/>
            <person name="Nelson W.C."/>
            <person name="White O."/>
            <person name="Peterson J.D."/>
            <person name="Khouri H.M."/>
            <person name="Hance I."/>
            <person name="Chris Lee P."/>
            <person name="Holtzapple E.K."/>
            <person name="Scanlan D."/>
            <person name="Tran K."/>
            <person name="Moazzez A."/>
            <person name="Utterback T.R."/>
            <person name="Rizzo M."/>
            <person name="Lee K."/>
            <person name="Kosack D."/>
            <person name="Moestl D."/>
            <person name="Wedler H."/>
            <person name="Lauber J."/>
            <person name="Stjepandic D."/>
            <person name="Hoheisel J."/>
            <person name="Straetz M."/>
            <person name="Heim S."/>
            <person name="Kiewitz C."/>
            <person name="Eisen J.A."/>
            <person name="Timmis K.N."/>
            <person name="Duesterhoeft A."/>
            <person name="Tuemmler B."/>
            <person name="Fraser C.M."/>
        </authorList>
    </citation>
    <scope>NUCLEOTIDE SEQUENCE [LARGE SCALE GENOMIC DNA]</scope>
    <source>
        <strain>ATCC 47054 / DSM 6125 / CFBP 8728 / NCIMB 11950 / KT2440</strain>
    </source>
</reference>
<name>AROQ2_PSEPK</name>
<feature type="chain" id="PRO_0000159921" description="3-dehydroquinate dehydratase 2">
    <location>
        <begin position="1"/>
        <end position="149"/>
    </location>
</feature>
<feature type="active site" description="Proton acceptor" evidence="1">
    <location>
        <position position="24"/>
    </location>
</feature>
<feature type="active site" description="Proton donor" evidence="1">
    <location>
        <position position="101"/>
    </location>
</feature>
<feature type="binding site" evidence="1">
    <location>
        <position position="75"/>
    </location>
    <ligand>
        <name>substrate</name>
    </ligand>
</feature>
<feature type="binding site" evidence="1">
    <location>
        <position position="81"/>
    </location>
    <ligand>
        <name>substrate</name>
    </ligand>
</feature>
<feature type="binding site" evidence="1">
    <location>
        <position position="88"/>
    </location>
    <ligand>
        <name>substrate</name>
    </ligand>
</feature>
<feature type="binding site" evidence="1">
    <location>
        <begin position="102"/>
        <end position="103"/>
    </location>
    <ligand>
        <name>substrate</name>
    </ligand>
</feature>
<feature type="binding site" evidence="1">
    <location>
        <position position="112"/>
    </location>
    <ligand>
        <name>substrate</name>
    </ligand>
</feature>
<feature type="site" description="Transition state stabilizer" evidence="1">
    <location>
        <position position="19"/>
    </location>
</feature>
<keyword id="KW-0028">Amino-acid biosynthesis</keyword>
<keyword id="KW-0057">Aromatic amino acid biosynthesis</keyword>
<keyword id="KW-0456">Lyase</keyword>
<keyword id="KW-1185">Reference proteome</keyword>
<evidence type="ECO:0000250" key="1"/>
<evidence type="ECO:0000305" key="2"/>
<gene>
    <name type="primary">aroQ2</name>
    <name type="synonym">aroQ-2</name>
    <name type="ordered locus">PP_2407</name>
</gene>
<sequence>MKPLILVLNGPNLNMLGTREPAQYGHETLADLAQGCADTAHAHGLEIEFRQTNHEGELIDWIHAARGRCAGIVINPGAWTHTSVAIRDALVASELPVIEVHLSNVHKREPFRHLSFVSSIAVGVICGLGSHGYRMALSHFAELLQERAA</sequence>
<protein>
    <recommendedName>
        <fullName>3-dehydroquinate dehydratase 2</fullName>
        <shortName>3-dehydroquinase 2</shortName>
        <ecNumber>4.2.1.10</ecNumber>
    </recommendedName>
    <alternativeName>
        <fullName>Type II DHQase 2</fullName>
    </alternativeName>
</protein>
<comment type="function">
    <text evidence="1">Catalyzes a trans-dehydration via an enolate intermediate.</text>
</comment>
<comment type="catalytic activity">
    <reaction>
        <text>3-dehydroquinate = 3-dehydroshikimate + H2O</text>
        <dbReference type="Rhea" id="RHEA:21096"/>
        <dbReference type="ChEBI" id="CHEBI:15377"/>
        <dbReference type="ChEBI" id="CHEBI:16630"/>
        <dbReference type="ChEBI" id="CHEBI:32364"/>
        <dbReference type="EC" id="4.2.1.10"/>
    </reaction>
</comment>
<comment type="pathway">
    <text>Metabolic intermediate biosynthesis; chorismate biosynthesis; chorismate from D-erythrose 4-phosphate and phosphoenolpyruvate: step 3/7.</text>
</comment>
<comment type="subunit">
    <text evidence="1">Homododecamer.</text>
</comment>
<comment type="similarity">
    <text evidence="2">Belongs to the type-II 3-dehydroquinase family.</text>
</comment>
<proteinExistence type="inferred from homology"/>